<sequence>MADIIETPVSRRLSTVKNIIIVLSGKGGVGKSSSSVQLALSLLAQSPTNRVGLIDLDITGPSLPRMVGLDTPTATVHQSSAGWVPVYVDQGRRLGVMSIGFLLKDRGDSVVWRGPKKDGMIRQFLSEVRWGDLDYLVIDTPPGTSDEHISLLTHLHPLFTPTMSNATTPTSILISTPQTTALNDTLKSLSFTRKLSLPVMGLVENMAGYVCPCCGEISDTFGKGGGEAMAHKEGVGFLGRVPIDTVLVSLLDAVSKGEVLGEGAVEHTSDEAAEGQTNGSTEHFPLLDKYLETTSSKVWKDITQKLVDKIEQHKSDIRARLESSSETLAIA</sequence>
<accession>P0CO90</accession>
<accession>Q561C3</accession>
<accession>Q5KQ24</accession>
<name>CFD1_CRYNJ</name>
<keyword id="KW-0004">4Fe-4S</keyword>
<keyword id="KW-0067">ATP-binding</keyword>
<keyword id="KW-0963">Cytoplasm</keyword>
<keyword id="KW-0408">Iron</keyword>
<keyword id="KW-0411">Iron-sulfur</keyword>
<keyword id="KW-0479">Metal-binding</keyword>
<keyword id="KW-0547">Nucleotide-binding</keyword>
<keyword id="KW-1185">Reference proteome</keyword>
<organism>
    <name type="scientific">Cryptococcus neoformans var. neoformans serotype D (strain JEC21 / ATCC MYA-565)</name>
    <name type="common">Filobasidiella neoformans</name>
    <dbReference type="NCBI Taxonomy" id="214684"/>
    <lineage>
        <taxon>Eukaryota</taxon>
        <taxon>Fungi</taxon>
        <taxon>Dikarya</taxon>
        <taxon>Basidiomycota</taxon>
        <taxon>Agaricomycotina</taxon>
        <taxon>Tremellomycetes</taxon>
        <taxon>Tremellales</taxon>
        <taxon>Cryptococcaceae</taxon>
        <taxon>Cryptococcus</taxon>
        <taxon>Cryptococcus neoformans species complex</taxon>
    </lineage>
</organism>
<proteinExistence type="inferred from homology"/>
<comment type="function">
    <text evidence="1">Component of the cytosolic iron-sulfur (Fe/S) protein assembly (CIA) machinery. Required for maturation of extramitochondrial Fe-S proteins. The NBP35-CFD1 heterotetramer forms a Fe-S scaffold complex, mediating the de novo assembly of an Fe-S cluster and its transfer to target apoproteins.</text>
</comment>
<comment type="cofactor">
    <cofactor evidence="1">
        <name>[4Fe-4S] cluster</name>
        <dbReference type="ChEBI" id="CHEBI:49883"/>
    </cofactor>
    <text evidence="1">Binds 4 [4Fe-4S] clusters per heterotetramer. Contains two stable clusters in the N-termini of NBP35 and two labile, bridging clusters between subunits of the NBP35-CFD1 heterotetramer.</text>
</comment>
<comment type="subunit">
    <text evidence="1">Heterotetramer of 2 NBP35 and 2 CFD1 chains.</text>
</comment>
<comment type="subcellular location">
    <subcellularLocation>
        <location evidence="1">Cytoplasm</location>
    </subcellularLocation>
</comment>
<comment type="similarity">
    <text evidence="1">Belongs to the Mrp/NBP35 ATP-binding proteins family. NUBP2/CFD1 subfamily.</text>
</comment>
<gene>
    <name evidence="1" type="primary">CFD1</name>
    <name type="ordered locus">CNA00720</name>
</gene>
<evidence type="ECO:0000255" key="1">
    <source>
        <dbReference type="HAMAP-Rule" id="MF_03039"/>
    </source>
</evidence>
<dbReference type="EMBL" id="AE017341">
    <property type="protein sequence ID" value="AAW40670.1"/>
    <property type="molecule type" value="Genomic_DNA"/>
</dbReference>
<dbReference type="RefSeq" id="XP_566489.1">
    <property type="nucleotide sequence ID" value="XM_566489.1"/>
</dbReference>
<dbReference type="SMR" id="P0CO90"/>
<dbReference type="STRING" id="214684.P0CO90"/>
<dbReference type="PaxDb" id="214684-P0CO90"/>
<dbReference type="EnsemblFungi" id="AAW40670">
    <property type="protein sequence ID" value="AAW40670"/>
    <property type="gene ID" value="CNA00720"/>
</dbReference>
<dbReference type="GeneID" id="3253480"/>
<dbReference type="KEGG" id="cne:CNA00720"/>
<dbReference type="VEuPathDB" id="FungiDB:CNA00720"/>
<dbReference type="eggNOG" id="KOG3022">
    <property type="taxonomic scope" value="Eukaryota"/>
</dbReference>
<dbReference type="HOGENOM" id="CLU_024839_0_1_1"/>
<dbReference type="InParanoid" id="P0CO90"/>
<dbReference type="OMA" id="WIPVFAD"/>
<dbReference type="OrthoDB" id="1741334at2759"/>
<dbReference type="Proteomes" id="UP000002149">
    <property type="component" value="Chromosome 1"/>
</dbReference>
<dbReference type="GO" id="GO:0005829">
    <property type="term" value="C:cytosol"/>
    <property type="evidence" value="ECO:0000318"/>
    <property type="project" value="GO_Central"/>
</dbReference>
<dbReference type="GO" id="GO:1904564">
    <property type="term" value="C:cytosolic [4Fe-4S] assembly scaffold complex"/>
    <property type="evidence" value="ECO:0007669"/>
    <property type="project" value="EnsemblFungi"/>
</dbReference>
<dbReference type="GO" id="GO:0051539">
    <property type="term" value="F:4 iron, 4 sulfur cluster binding"/>
    <property type="evidence" value="ECO:0007669"/>
    <property type="project" value="UniProtKB-UniRule"/>
</dbReference>
<dbReference type="GO" id="GO:0005524">
    <property type="term" value="F:ATP binding"/>
    <property type="evidence" value="ECO:0007669"/>
    <property type="project" value="UniProtKB-KW"/>
</dbReference>
<dbReference type="GO" id="GO:0016887">
    <property type="term" value="F:ATP hydrolysis activity"/>
    <property type="evidence" value="ECO:0007669"/>
    <property type="project" value="EnsemblFungi"/>
</dbReference>
<dbReference type="GO" id="GO:0140663">
    <property type="term" value="F:ATP-dependent FeS chaperone activity"/>
    <property type="evidence" value="ECO:0007669"/>
    <property type="project" value="InterPro"/>
</dbReference>
<dbReference type="GO" id="GO:0051536">
    <property type="term" value="F:iron-sulfur cluster binding"/>
    <property type="evidence" value="ECO:0000318"/>
    <property type="project" value="GO_Central"/>
</dbReference>
<dbReference type="GO" id="GO:0046872">
    <property type="term" value="F:metal ion binding"/>
    <property type="evidence" value="ECO:0007669"/>
    <property type="project" value="UniProtKB-KW"/>
</dbReference>
<dbReference type="GO" id="GO:0016226">
    <property type="term" value="P:iron-sulfur cluster assembly"/>
    <property type="evidence" value="ECO:0000318"/>
    <property type="project" value="GO_Central"/>
</dbReference>
<dbReference type="GO" id="GO:0002098">
    <property type="term" value="P:tRNA wobble uridine modification"/>
    <property type="evidence" value="ECO:0007669"/>
    <property type="project" value="EnsemblFungi"/>
</dbReference>
<dbReference type="CDD" id="cd02037">
    <property type="entry name" value="Mrp_NBP35"/>
    <property type="match status" value="1"/>
</dbReference>
<dbReference type="FunFam" id="3.40.50.300:FF:002132">
    <property type="entry name" value="Cytosolic Fe-S cluster assembly factor CFD1"/>
    <property type="match status" value="1"/>
</dbReference>
<dbReference type="Gene3D" id="3.40.50.300">
    <property type="entry name" value="P-loop containing nucleotide triphosphate hydrolases"/>
    <property type="match status" value="1"/>
</dbReference>
<dbReference type="HAMAP" id="MF_02040">
    <property type="entry name" value="Mrp_NBP35"/>
    <property type="match status" value="1"/>
</dbReference>
<dbReference type="HAMAP" id="MF_03039">
    <property type="entry name" value="NUBP2"/>
    <property type="match status" value="1"/>
</dbReference>
<dbReference type="InterPro" id="IPR000808">
    <property type="entry name" value="Mrp-like_CS"/>
</dbReference>
<dbReference type="InterPro" id="IPR019591">
    <property type="entry name" value="Mrp/NBP35_ATP-bd"/>
</dbReference>
<dbReference type="InterPro" id="IPR028600">
    <property type="entry name" value="NUBP2/Cfd1_eukaryotes"/>
</dbReference>
<dbReference type="InterPro" id="IPR027417">
    <property type="entry name" value="P-loop_NTPase"/>
</dbReference>
<dbReference type="InterPro" id="IPR033756">
    <property type="entry name" value="YlxH/NBP35"/>
</dbReference>
<dbReference type="PANTHER" id="PTHR23264:SF19">
    <property type="entry name" value="CYTOSOLIC FE-S CLUSTER ASSEMBLY FACTOR NUBP2"/>
    <property type="match status" value="1"/>
</dbReference>
<dbReference type="PANTHER" id="PTHR23264">
    <property type="entry name" value="NUCLEOTIDE-BINDING PROTEIN NBP35 YEAST -RELATED"/>
    <property type="match status" value="1"/>
</dbReference>
<dbReference type="Pfam" id="PF10609">
    <property type="entry name" value="ParA"/>
    <property type="match status" value="1"/>
</dbReference>
<dbReference type="SUPFAM" id="SSF52540">
    <property type="entry name" value="P-loop containing nucleoside triphosphate hydrolases"/>
    <property type="match status" value="1"/>
</dbReference>
<dbReference type="PROSITE" id="PS01215">
    <property type="entry name" value="MRP"/>
    <property type="match status" value="1"/>
</dbReference>
<reference key="1">
    <citation type="journal article" date="2005" name="Science">
        <title>The genome of the basidiomycetous yeast and human pathogen Cryptococcus neoformans.</title>
        <authorList>
            <person name="Loftus B.J."/>
            <person name="Fung E."/>
            <person name="Roncaglia P."/>
            <person name="Rowley D."/>
            <person name="Amedeo P."/>
            <person name="Bruno D."/>
            <person name="Vamathevan J."/>
            <person name="Miranda M."/>
            <person name="Anderson I.J."/>
            <person name="Fraser J.A."/>
            <person name="Allen J.E."/>
            <person name="Bosdet I.E."/>
            <person name="Brent M.R."/>
            <person name="Chiu R."/>
            <person name="Doering T.L."/>
            <person name="Donlin M.J."/>
            <person name="D'Souza C.A."/>
            <person name="Fox D.S."/>
            <person name="Grinberg V."/>
            <person name="Fu J."/>
            <person name="Fukushima M."/>
            <person name="Haas B.J."/>
            <person name="Huang J.C."/>
            <person name="Janbon G."/>
            <person name="Jones S.J.M."/>
            <person name="Koo H.L."/>
            <person name="Krzywinski M.I."/>
            <person name="Kwon-Chung K.J."/>
            <person name="Lengeler K.B."/>
            <person name="Maiti R."/>
            <person name="Marra M.A."/>
            <person name="Marra R.E."/>
            <person name="Mathewson C.A."/>
            <person name="Mitchell T.G."/>
            <person name="Pertea M."/>
            <person name="Riggs F.R."/>
            <person name="Salzberg S.L."/>
            <person name="Schein J.E."/>
            <person name="Shvartsbeyn A."/>
            <person name="Shin H."/>
            <person name="Shumway M."/>
            <person name="Specht C.A."/>
            <person name="Suh B.B."/>
            <person name="Tenney A."/>
            <person name="Utterback T.R."/>
            <person name="Wickes B.L."/>
            <person name="Wortman J.R."/>
            <person name="Wye N.H."/>
            <person name="Kronstad J.W."/>
            <person name="Lodge J.K."/>
            <person name="Heitman J."/>
            <person name="Davis R.W."/>
            <person name="Fraser C.M."/>
            <person name="Hyman R.W."/>
        </authorList>
    </citation>
    <scope>NUCLEOTIDE SEQUENCE [LARGE SCALE GENOMIC DNA]</scope>
    <source>
        <strain>JEC21 / ATCC MYA-565</strain>
    </source>
</reference>
<protein>
    <recommendedName>
        <fullName evidence="1">Cytosolic Fe-S cluster assembly factor CFD1</fullName>
    </recommendedName>
    <alternativeName>
        <fullName evidence="1">Cytosolic Fe-S cluster-deficient protein 1</fullName>
    </alternativeName>
</protein>
<feature type="chain" id="PRO_0000278877" description="Cytosolic Fe-S cluster assembly factor CFD1">
    <location>
        <begin position="1"/>
        <end position="331"/>
    </location>
</feature>
<feature type="binding site" evidence="1">
    <location>
        <begin position="25"/>
        <end position="32"/>
    </location>
    <ligand>
        <name>ATP</name>
        <dbReference type="ChEBI" id="CHEBI:30616"/>
    </ligand>
</feature>
<feature type="binding site" evidence="1">
    <location>
        <position position="211"/>
    </location>
    <ligand>
        <name>[4Fe-4S] cluster</name>
        <dbReference type="ChEBI" id="CHEBI:49883"/>
        <note>ligand shared between dimeric partners</note>
    </ligand>
</feature>
<feature type="binding site" evidence="1">
    <location>
        <position position="214"/>
    </location>
    <ligand>
        <name>[4Fe-4S] cluster</name>
        <dbReference type="ChEBI" id="CHEBI:49883"/>
        <note>ligand shared between dimeric partners</note>
    </ligand>
</feature>